<keyword id="KW-1003">Cell membrane</keyword>
<keyword id="KW-0472">Membrane</keyword>
<keyword id="KW-0812">Transmembrane</keyword>
<keyword id="KW-1133">Transmembrane helix</keyword>
<reference key="1">
    <citation type="journal article" date="2011" name="Proc. Natl. Acad. Sci. U.S.A.">
        <title>Genomic anatomy of Escherichia coli O157:H7 outbreaks.</title>
        <authorList>
            <person name="Eppinger M."/>
            <person name="Mammel M.K."/>
            <person name="Leclerc J.E."/>
            <person name="Ravel J."/>
            <person name="Cebula T.A."/>
        </authorList>
    </citation>
    <scope>NUCLEOTIDE SEQUENCE [LARGE SCALE GENOMIC DNA]</scope>
    <source>
        <strain>EC4115 / EHEC</strain>
    </source>
</reference>
<accession>B5Z4Q8</accession>
<organism>
    <name type="scientific">Escherichia coli O157:H7 (strain EC4115 / EHEC)</name>
    <dbReference type="NCBI Taxonomy" id="444450"/>
    <lineage>
        <taxon>Bacteria</taxon>
        <taxon>Pseudomonadati</taxon>
        <taxon>Pseudomonadota</taxon>
        <taxon>Gammaproteobacteria</taxon>
        <taxon>Enterobacterales</taxon>
        <taxon>Enterobacteriaceae</taxon>
        <taxon>Escherichia</taxon>
    </lineage>
</organism>
<name>YTJA_ECO5E</name>
<comment type="subcellular location">
    <subcellularLocation>
        <location evidence="1">Cell membrane</location>
        <topology evidence="1">Multi-pass membrane protein</topology>
    </subcellularLocation>
</comment>
<comment type="similarity">
    <text evidence="1">Belongs to the UPF0391 family.</text>
</comment>
<gene>
    <name evidence="1" type="primary">ytjA</name>
    <name type="ordered locus">ECH74115_5889</name>
</gene>
<feature type="chain" id="PRO_1000143710" description="UPF0391 membrane protein YtjA">
    <location>
        <begin position="1"/>
        <end position="53"/>
    </location>
</feature>
<feature type="transmembrane region" description="Helical" evidence="1">
    <location>
        <begin position="4"/>
        <end position="24"/>
    </location>
</feature>
<feature type="transmembrane region" description="Helical" evidence="1">
    <location>
        <begin position="30"/>
        <end position="48"/>
    </location>
</feature>
<proteinExistence type="inferred from homology"/>
<protein>
    <recommendedName>
        <fullName evidence="1">UPF0391 membrane protein YtjA</fullName>
    </recommendedName>
</protein>
<sequence length="53" mass="5536">MFRWGIIFLVIALIAAALGFGGLAGTAAGAAKIVFVVGIILFLVSLFMGRKRP</sequence>
<evidence type="ECO:0000255" key="1">
    <source>
        <dbReference type="HAMAP-Rule" id="MF_01361"/>
    </source>
</evidence>
<dbReference type="EMBL" id="CP001164">
    <property type="protein sequence ID" value="ACI39656.1"/>
    <property type="molecule type" value="Genomic_DNA"/>
</dbReference>
<dbReference type="RefSeq" id="WP_000490275.1">
    <property type="nucleotide sequence ID" value="NC_011353.1"/>
</dbReference>
<dbReference type="KEGG" id="ecf:ECH74115_5889"/>
<dbReference type="HOGENOM" id="CLU_187346_2_0_6"/>
<dbReference type="GO" id="GO:0005886">
    <property type="term" value="C:plasma membrane"/>
    <property type="evidence" value="ECO:0007669"/>
    <property type="project" value="UniProtKB-SubCell"/>
</dbReference>
<dbReference type="HAMAP" id="MF_01361">
    <property type="entry name" value="UPF0391"/>
    <property type="match status" value="1"/>
</dbReference>
<dbReference type="InterPro" id="IPR009760">
    <property type="entry name" value="DUF1328"/>
</dbReference>
<dbReference type="NCBIfam" id="NF010229">
    <property type="entry name" value="PRK13682.1-4"/>
    <property type="match status" value="1"/>
</dbReference>
<dbReference type="NCBIfam" id="NF010230">
    <property type="entry name" value="PRK13682.1-5"/>
    <property type="match status" value="1"/>
</dbReference>
<dbReference type="Pfam" id="PF07043">
    <property type="entry name" value="DUF1328"/>
    <property type="match status" value="1"/>
</dbReference>
<dbReference type="PIRSF" id="PIRSF036466">
    <property type="entry name" value="UCP036466"/>
    <property type="match status" value="1"/>
</dbReference>